<feature type="chain" id="PRO_1000015500" description="Deoxyuridine 5'-triphosphate nucleotidohydrolase">
    <location>
        <begin position="1"/>
        <end position="156"/>
    </location>
</feature>
<feature type="binding site" evidence="1">
    <location>
        <begin position="76"/>
        <end position="78"/>
    </location>
    <ligand>
        <name>substrate</name>
    </ligand>
</feature>
<feature type="binding site" evidence="1">
    <location>
        <position position="89"/>
    </location>
    <ligand>
        <name>substrate</name>
    </ligand>
</feature>
<feature type="binding site" evidence="1">
    <location>
        <begin position="93"/>
        <end position="95"/>
    </location>
    <ligand>
        <name>substrate</name>
    </ligand>
</feature>
<feature type="binding site" evidence="1">
    <location>
        <position position="103"/>
    </location>
    <ligand>
        <name>substrate</name>
    </ligand>
</feature>
<accession>Q2KDD4</accession>
<gene>
    <name evidence="1" type="primary">dut</name>
    <name type="ordered locus">RHE_CH00330</name>
</gene>
<organism>
    <name type="scientific">Rhizobium etli (strain ATCC 51251 / DSM 11541 / JCM 21823 / NBRC 15573 / CFN 42)</name>
    <dbReference type="NCBI Taxonomy" id="347834"/>
    <lineage>
        <taxon>Bacteria</taxon>
        <taxon>Pseudomonadati</taxon>
        <taxon>Pseudomonadota</taxon>
        <taxon>Alphaproteobacteria</taxon>
        <taxon>Hyphomicrobiales</taxon>
        <taxon>Rhizobiaceae</taxon>
        <taxon>Rhizobium/Agrobacterium group</taxon>
        <taxon>Rhizobium</taxon>
    </lineage>
</organism>
<dbReference type="EC" id="3.6.1.23" evidence="1"/>
<dbReference type="EMBL" id="CP000133">
    <property type="protein sequence ID" value="ABC89152.1"/>
    <property type="molecule type" value="Genomic_DNA"/>
</dbReference>
<dbReference type="RefSeq" id="WP_011423714.1">
    <property type="nucleotide sequence ID" value="NC_007761.1"/>
</dbReference>
<dbReference type="SMR" id="Q2KDD4"/>
<dbReference type="KEGG" id="ret:RHE_CH00330"/>
<dbReference type="eggNOG" id="COG0756">
    <property type="taxonomic scope" value="Bacteria"/>
</dbReference>
<dbReference type="HOGENOM" id="CLU_068508_1_0_5"/>
<dbReference type="OrthoDB" id="9809956at2"/>
<dbReference type="UniPathway" id="UPA00610">
    <property type="reaction ID" value="UER00666"/>
</dbReference>
<dbReference type="Proteomes" id="UP000001936">
    <property type="component" value="Chromosome"/>
</dbReference>
<dbReference type="GO" id="GO:0004170">
    <property type="term" value="F:dUTP diphosphatase activity"/>
    <property type="evidence" value="ECO:0007669"/>
    <property type="project" value="UniProtKB-UniRule"/>
</dbReference>
<dbReference type="GO" id="GO:0000287">
    <property type="term" value="F:magnesium ion binding"/>
    <property type="evidence" value="ECO:0007669"/>
    <property type="project" value="UniProtKB-UniRule"/>
</dbReference>
<dbReference type="GO" id="GO:0006226">
    <property type="term" value="P:dUMP biosynthetic process"/>
    <property type="evidence" value="ECO:0007669"/>
    <property type="project" value="UniProtKB-UniRule"/>
</dbReference>
<dbReference type="GO" id="GO:0046081">
    <property type="term" value="P:dUTP catabolic process"/>
    <property type="evidence" value="ECO:0007669"/>
    <property type="project" value="InterPro"/>
</dbReference>
<dbReference type="CDD" id="cd07557">
    <property type="entry name" value="trimeric_dUTPase"/>
    <property type="match status" value="1"/>
</dbReference>
<dbReference type="Gene3D" id="2.70.40.10">
    <property type="match status" value="1"/>
</dbReference>
<dbReference type="HAMAP" id="MF_00116">
    <property type="entry name" value="dUTPase_bact"/>
    <property type="match status" value="1"/>
</dbReference>
<dbReference type="InterPro" id="IPR008181">
    <property type="entry name" value="dUTPase"/>
</dbReference>
<dbReference type="InterPro" id="IPR029054">
    <property type="entry name" value="dUTPase-like"/>
</dbReference>
<dbReference type="InterPro" id="IPR036157">
    <property type="entry name" value="dUTPase-like_sf"/>
</dbReference>
<dbReference type="InterPro" id="IPR033704">
    <property type="entry name" value="dUTPase_trimeric"/>
</dbReference>
<dbReference type="NCBIfam" id="TIGR00576">
    <property type="entry name" value="dut"/>
    <property type="match status" value="1"/>
</dbReference>
<dbReference type="NCBIfam" id="NF001862">
    <property type="entry name" value="PRK00601.1"/>
    <property type="match status" value="1"/>
</dbReference>
<dbReference type="PANTHER" id="PTHR11241">
    <property type="entry name" value="DEOXYURIDINE 5'-TRIPHOSPHATE NUCLEOTIDOHYDROLASE"/>
    <property type="match status" value="1"/>
</dbReference>
<dbReference type="PANTHER" id="PTHR11241:SF0">
    <property type="entry name" value="DEOXYURIDINE 5'-TRIPHOSPHATE NUCLEOTIDOHYDROLASE"/>
    <property type="match status" value="1"/>
</dbReference>
<dbReference type="Pfam" id="PF00692">
    <property type="entry name" value="dUTPase"/>
    <property type="match status" value="1"/>
</dbReference>
<dbReference type="SUPFAM" id="SSF51283">
    <property type="entry name" value="dUTPase-like"/>
    <property type="match status" value="1"/>
</dbReference>
<protein>
    <recommendedName>
        <fullName evidence="1">Deoxyuridine 5'-triphosphate nucleotidohydrolase</fullName>
        <shortName evidence="1">dUTPase</shortName>
        <ecNumber evidence="1">3.6.1.23</ecNumber>
    </recommendedName>
    <alternativeName>
        <fullName evidence="1">dUTP pyrophosphatase</fullName>
    </alternativeName>
</protein>
<keyword id="KW-0378">Hydrolase</keyword>
<keyword id="KW-0460">Magnesium</keyword>
<keyword id="KW-0479">Metal-binding</keyword>
<keyword id="KW-0546">Nucleotide metabolism</keyword>
<keyword id="KW-1185">Reference proteome</keyword>
<evidence type="ECO:0000255" key="1">
    <source>
        <dbReference type="HAMAP-Rule" id="MF_00116"/>
    </source>
</evidence>
<comment type="function">
    <text evidence="1">This enzyme is involved in nucleotide metabolism: it produces dUMP, the immediate precursor of thymidine nucleotides and it decreases the intracellular concentration of dUTP so that uracil cannot be incorporated into DNA.</text>
</comment>
<comment type="catalytic activity">
    <reaction evidence="1">
        <text>dUTP + H2O = dUMP + diphosphate + H(+)</text>
        <dbReference type="Rhea" id="RHEA:10248"/>
        <dbReference type="ChEBI" id="CHEBI:15377"/>
        <dbReference type="ChEBI" id="CHEBI:15378"/>
        <dbReference type="ChEBI" id="CHEBI:33019"/>
        <dbReference type="ChEBI" id="CHEBI:61555"/>
        <dbReference type="ChEBI" id="CHEBI:246422"/>
        <dbReference type="EC" id="3.6.1.23"/>
    </reaction>
</comment>
<comment type="cofactor">
    <cofactor evidence="1">
        <name>Mg(2+)</name>
        <dbReference type="ChEBI" id="CHEBI:18420"/>
    </cofactor>
</comment>
<comment type="pathway">
    <text evidence="1">Pyrimidine metabolism; dUMP biosynthesis; dUMP from dCTP (dUTP route): step 2/2.</text>
</comment>
<comment type="similarity">
    <text evidence="1">Belongs to the dUTPase family.</text>
</comment>
<name>DUT_RHIEC</name>
<sequence length="156" mass="16285">MTIHHDTPPTLNLIRLANGEGLDLPAYESKGAAGMDLRAAVDGDAPLTLAPGERALLPTGFIFEIPEGFEGQVRPRSGLAFKHGITCLNSPGTVDSDYRGEVKVLLANLGEEAFVIERGMRIAQMVIAPVTQARVTEIAAASETARGAGGFGSTGV</sequence>
<reference key="1">
    <citation type="journal article" date="2006" name="Proc. Natl. Acad. Sci. U.S.A.">
        <title>The partitioned Rhizobium etli genome: genetic and metabolic redundancy in seven interacting replicons.</title>
        <authorList>
            <person name="Gonzalez V."/>
            <person name="Santamaria R.I."/>
            <person name="Bustos P."/>
            <person name="Hernandez-Gonzalez I."/>
            <person name="Medrano-Soto A."/>
            <person name="Moreno-Hagelsieb G."/>
            <person name="Janga S.C."/>
            <person name="Ramirez M.A."/>
            <person name="Jimenez-Jacinto V."/>
            <person name="Collado-Vides J."/>
            <person name="Davila G."/>
        </authorList>
    </citation>
    <scope>NUCLEOTIDE SEQUENCE [LARGE SCALE GENOMIC DNA]</scope>
    <source>
        <strain>ATCC 51251 / DSM 11541 / JCM 21823 / NBRC 15573 / CFN 42</strain>
    </source>
</reference>
<proteinExistence type="inferred from homology"/>